<comment type="function">
    <text evidence="1">Allows the formation of correctly charged Gln-tRNA(Gln) through the transamidation of misacylated Glu-tRNA(Gln) in organisms which lack glutaminyl-tRNA synthetase. The reaction takes place in the presence of glutamine and ATP through an activated gamma-phospho-Glu-tRNA(Gln). The GatDE system is specific for glutamate and does not act on aspartate.</text>
</comment>
<comment type="catalytic activity">
    <reaction evidence="1">
        <text>L-glutamyl-tRNA(Gln) + L-glutamine + ATP + H2O = L-glutaminyl-tRNA(Gln) + L-glutamate + ADP + phosphate + H(+)</text>
        <dbReference type="Rhea" id="RHEA:17521"/>
        <dbReference type="Rhea" id="RHEA-COMP:9681"/>
        <dbReference type="Rhea" id="RHEA-COMP:9684"/>
        <dbReference type="ChEBI" id="CHEBI:15377"/>
        <dbReference type="ChEBI" id="CHEBI:15378"/>
        <dbReference type="ChEBI" id="CHEBI:29985"/>
        <dbReference type="ChEBI" id="CHEBI:30616"/>
        <dbReference type="ChEBI" id="CHEBI:43474"/>
        <dbReference type="ChEBI" id="CHEBI:58359"/>
        <dbReference type="ChEBI" id="CHEBI:78520"/>
        <dbReference type="ChEBI" id="CHEBI:78521"/>
        <dbReference type="ChEBI" id="CHEBI:456216"/>
    </reaction>
</comment>
<comment type="subunit">
    <text evidence="1">Heterodimer of GatD and GatE.</text>
</comment>
<comment type="similarity">
    <text evidence="1">Belongs to the GatB/GatE family. GatE subfamily.</text>
</comment>
<name>GATE_PYRFU</name>
<dbReference type="EC" id="6.3.5.-" evidence="1"/>
<dbReference type="EMBL" id="AE009950">
    <property type="protein sequence ID" value="AAL81586.1"/>
    <property type="molecule type" value="Genomic_DNA"/>
</dbReference>
<dbReference type="RefSeq" id="WP_011012609.1">
    <property type="nucleotide sequence ID" value="NZ_CP023154.1"/>
</dbReference>
<dbReference type="SMR" id="Q8U0W9"/>
<dbReference type="STRING" id="186497.PF1462"/>
<dbReference type="PaxDb" id="186497-PF1462"/>
<dbReference type="GeneID" id="41713273"/>
<dbReference type="KEGG" id="pfu:PF1462"/>
<dbReference type="PATRIC" id="fig|186497.12.peg.1525"/>
<dbReference type="eggNOG" id="arCOG01719">
    <property type="taxonomic scope" value="Archaea"/>
</dbReference>
<dbReference type="HOGENOM" id="CLU_030702_0_0_2"/>
<dbReference type="OrthoDB" id="7316at2157"/>
<dbReference type="PhylomeDB" id="Q8U0W9"/>
<dbReference type="Proteomes" id="UP000001013">
    <property type="component" value="Chromosome"/>
</dbReference>
<dbReference type="GO" id="GO:0005737">
    <property type="term" value="C:cytoplasm"/>
    <property type="evidence" value="ECO:0007669"/>
    <property type="project" value="InterPro"/>
</dbReference>
<dbReference type="GO" id="GO:0004812">
    <property type="term" value="F:aminoacyl-tRNA ligase activity"/>
    <property type="evidence" value="ECO:0007669"/>
    <property type="project" value="InterPro"/>
</dbReference>
<dbReference type="GO" id="GO:0005524">
    <property type="term" value="F:ATP binding"/>
    <property type="evidence" value="ECO:0007669"/>
    <property type="project" value="UniProtKB-KW"/>
</dbReference>
<dbReference type="GO" id="GO:0050567">
    <property type="term" value="F:glutaminyl-tRNA synthase (glutamine-hydrolyzing) activity"/>
    <property type="evidence" value="ECO:0007669"/>
    <property type="project" value="UniProtKB-UniRule"/>
</dbReference>
<dbReference type="GO" id="GO:0070681">
    <property type="term" value="P:glutaminyl-tRNAGln biosynthesis via transamidation"/>
    <property type="evidence" value="ECO:0007669"/>
    <property type="project" value="TreeGrafter"/>
</dbReference>
<dbReference type="GO" id="GO:0006412">
    <property type="term" value="P:translation"/>
    <property type="evidence" value="ECO:0007669"/>
    <property type="project" value="UniProtKB-UniRule"/>
</dbReference>
<dbReference type="FunFam" id="1.10.10.410:FF:000003">
    <property type="entry name" value="Glutamyl-tRNA(Gln) amidotransferase subunit E"/>
    <property type="match status" value="1"/>
</dbReference>
<dbReference type="FunFam" id="1.10.150.380:FF:000002">
    <property type="entry name" value="Glutamyl-tRNA(Gln) amidotransferase subunit E"/>
    <property type="match status" value="1"/>
</dbReference>
<dbReference type="FunFam" id="3.30.1360.30:FF:000003">
    <property type="entry name" value="Glutamyl-tRNA(Gln) amidotransferase subunit E"/>
    <property type="match status" value="1"/>
</dbReference>
<dbReference type="Gene3D" id="1.10.10.410">
    <property type="match status" value="1"/>
</dbReference>
<dbReference type="Gene3D" id="3.30.1360.30">
    <property type="entry name" value="GAD-like domain"/>
    <property type="match status" value="1"/>
</dbReference>
<dbReference type="Gene3D" id="1.10.150.380">
    <property type="entry name" value="GatB domain, N-terminal subdomain"/>
    <property type="match status" value="1"/>
</dbReference>
<dbReference type="HAMAP" id="MF_00588">
    <property type="entry name" value="GatE"/>
    <property type="match status" value="1"/>
</dbReference>
<dbReference type="InterPro" id="IPR017959">
    <property type="entry name" value="Asn/Gln-tRNA_amidoTrfase_suB/E"/>
</dbReference>
<dbReference type="InterPro" id="IPR006075">
    <property type="entry name" value="Asn/Gln-tRNA_Trfase_suB/E_cat"/>
</dbReference>
<dbReference type="InterPro" id="IPR018027">
    <property type="entry name" value="Asn/Gln_amidotransferase"/>
</dbReference>
<dbReference type="InterPro" id="IPR003789">
    <property type="entry name" value="Asn/Gln_tRNA_amidoTrase-B-like"/>
</dbReference>
<dbReference type="InterPro" id="IPR004115">
    <property type="entry name" value="GAD-like_sf"/>
</dbReference>
<dbReference type="InterPro" id="IPR029351">
    <property type="entry name" value="GAD_dom"/>
</dbReference>
<dbReference type="InterPro" id="IPR042114">
    <property type="entry name" value="GatB_C_1"/>
</dbReference>
<dbReference type="InterPro" id="IPR023168">
    <property type="entry name" value="GatB_Yqey_C_2"/>
</dbReference>
<dbReference type="InterPro" id="IPR004414">
    <property type="entry name" value="GatE"/>
</dbReference>
<dbReference type="InterPro" id="IPR017958">
    <property type="entry name" value="Gln-tRNA_amidoTrfase_suB_CS"/>
</dbReference>
<dbReference type="InterPro" id="IPR014746">
    <property type="entry name" value="Gln_synth/guanido_kin_cat_dom"/>
</dbReference>
<dbReference type="NCBIfam" id="TIGR00134">
    <property type="entry name" value="gatE_arch"/>
    <property type="match status" value="1"/>
</dbReference>
<dbReference type="NCBIfam" id="NF003107">
    <property type="entry name" value="PRK04028.1"/>
    <property type="match status" value="1"/>
</dbReference>
<dbReference type="PANTHER" id="PTHR11659">
    <property type="entry name" value="GLUTAMYL-TRNA GLN AMIDOTRANSFERASE SUBUNIT B MITOCHONDRIAL AND PROKARYOTIC PET112-RELATED"/>
    <property type="match status" value="1"/>
</dbReference>
<dbReference type="PANTHER" id="PTHR11659:SF2">
    <property type="entry name" value="GLUTAMYL-TRNA(GLN) AMIDOTRANSFERASE SUBUNIT E"/>
    <property type="match status" value="1"/>
</dbReference>
<dbReference type="Pfam" id="PF02938">
    <property type="entry name" value="GAD"/>
    <property type="match status" value="1"/>
</dbReference>
<dbReference type="Pfam" id="PF02934">
    <property type="entry name" value="GatB_N"/>
    <property type="match status" value="1"/>
</dbReference>
<dbReference type="Pfam" id="PF02637">
    <property type="entry name" value="GatB_Yqey"/>
    <property type="match status" value="1"/>
</dbReference>
<dbReference type="SMART" id="SM00845">
    <property type="entry name" value="GatB_Yqey"/>
    <property type="match status" value="1"/>
</dbReference>
<dbReference type="SUPFAM" id="SSF55261">
    <property type="entry name" value="GAD domain-like"/>
    <property type="match status" value="1"/>
</dbReference>
<dbReference type="SUPFAM" id="SSF89095">
    <property type="entry name" value="GatB/YqeY motif"/>
    <property type="match status" value="1"/>
</dbReference>
<dbReference type="SUPFAM" id="SSF55931">
    <property type="entry name" value="Glutamine synthetase/guanido kinase"/>
    <property type="match status" value="1"/>
</dbReference>
<dbReference type="PROSITE" id="PS01234">
    <property type="entry name" value="GATB"/>
    <property type="match status" value="1"/>
</dbReference>
<proteinExistence type="inferred from homology"/>
<reference key="1">
    <citation type="journal article" date="1999" name="Genetics">
        <title>Divergence of the hyperthermophilic archaea Pyrococcus furiosus and P. horikoshii inferred from complete genomic sequences.</title>
        <authorList>
            <person name="Maeder D.L."/>
            <person name="Weiss R.B."/>
            <person name="Dunn D.M."/>
            <person name="Cherry J.L."/>
            <person name="Gonzalez J.M."/>
            <person name="DiRuggiero J."/>
            <person name="Robb F.T."/>
        </authorList>
    </citation>
    <scope>NUCLEOTIDE SEQUENCE [LARGE SCALE GENOMIC DNA]</scope>
    <source>
        <strain>ATCC 43587 / DSM 3638 / JCM 8422 / Vc1</strain>
    </source>
</reference>
<organism>
    <name type="scientific">Pyrococcus furiosus (strain ATCC 43587 / DSM 3638 / JCM 8422 / Vc1)</name>
    <dbReference type="NCBI Taxonomy" id="186497"/>
    <lineage>
        <taxon>Archaea</taxon>
        <taxon>Methanobacteriati</taxon>
        <taxon>Methanobacteriota</taxon>
        <taxon>Thermococci</taxon>
        <taxon>Thermococcales</taxon>
        <taxon>Thermococcaceae</taxon>
        <taxon>Pyrococcus</taxon>
    </lineage>
</organism>
<feature type="chain" id="PRO_0000140078" description="Glutamyl-tRNA(Gln) amidotransferase subunit E">
    <location>
        <begin position="1"/>
        <end position="628"/>
    </location>
</feature>
<gene>
    <name evidence="1" type="primary">gatE</name>
    <name type="ordered locus">PF1462</name>
</gene>
<evidence type="ECO:0000255" key="1">
    <source>
        <dbReference type="HAMAP-Rule" id="MF_00588"/>
    </source>
</evidence>
<keyword id="KW-0067">ATP-binding</keyword>
<keyword id="KW-0436">Ligase</keyword>
<keyword id="KW-0547">Nucleotide-binding</keyword>
<keyword id="KW-0648">Protein biosynthesis</keyword>
<keyword id="KW-1185">Reference proteome</keyword>
<accession>Q8U0W9</accession>
<protein>
    <recommendedName>
        <fullName evidence="1">Glutamyl-tRNA(Gln) amidotransferase subunit E</fullName>
        <shortName evidence="1">Glu-ADT subunit E</shortName>
        <ecNumber evidence="1">6.3.5.-</ecNumber>
    </recommendedName>
</protein>
<sequence length="628" mass="71236">MEKINYEEVGLKVGLEIHRQLDTKKLFSPVPSKLSDDVDFTFKRRLRPTMSELGEIDPAALEEFKKGRTYIYEANNELGDLVYMDEEPPRGPDEEALEVALQIAYLLNAKPVDEVYYMRKIVIDGSNVSGFQRTAIIATDGKVETPWGTVGIPTICLEEDAARIIETRDREVIYRIDRLGIPLVEISTTPDIHHPEQAKVVAKFIGDALRATRKVKRGLGTIRQDLNVSIKGGARIEIKGVQELDMIPVIIEREVQRQLNLLKIRDELRKRGVTPEDIKEEFYDVTDIFKDTKSKIIARILKKGGKVLAIKLPKFKGLIGMEIQPGRRLGTEFADRAKKYVPGIFHSDELPNYGITQEEVEKVRKLLELEEEDAFVLVAAQEEIAKKALKEVIIRAREAIIGVPEETRRALPDGNTQYMRPLPGKARMYPETDIPPIRITEEMKRRIKENLPELPQAKVEKYVKEFGIDKSMAQTIVDDERDELFEELIEMGVKPSLAASILAVVLKGLRKEVPIENITEEHIKGAFRLYLEGKIAKEAFEEIFKELAQHPEKTAEEVAQEKGLTLLSEEEVRKIVDEVVNQYIDVIKEKGMGAMGLIMGRVMTKVRGKADGKLVSQIVKEKIREISG</sequence>